<feature type="chain" id="PRO_0000118068" description="NADH-ubiquinone oxidoreductase chain 5">
    <location>
        <begin position="1"/>
        <end position="606"/>
    </location>
</feature>
<feature type="transmembrane region" description="Helical" evidence="2">
    <location>
        <begin position="4"/>
        <end position="24"/>
    </location>
</feature>
<feature type="transmembrane region" description="Helical" evidence="2">
    <location>
        <begin position="43"/>
        <end position="63"/>
    </location>
</feature>
<feature type="transmembrane region" description="Helical" evidence="2">
    <location>
        <begin position="87"/>
        <end position="107"/>
    </location>
</feature>
<feature type="transmembrane region" description="Helical" evidence="2">
    <location>
        <begin position="117"/>
        <end position="137"/>
    </location>
</feature>
<feature type="transmembrane region" description="Helical" evidence="2">
    <location>
        <begin position="140"/>
        <end position="160"/>
    </location>
</feature>
<feature type="transmembrane region" description="Helical" evidence="2">
    <location>
        <begin position="171"/>
        <end position="191"/>
    </location>
</feature>
<feature type="transmembrane region" description="Helical" evidence="2">
    <location>
        <begin position="213"/>
        <end position="233"/>
    </location>
</feature>
<feature type="transmembrane region" description="Helical" evidence="2">
    <location>
        <begin position="241"/>
        <end position="261"/>
    </location>
</feature>
<feature type="transmembrane region" description="Helical" evidence="2">
    <location>
        <begin position="273"/>
        <end position="293"/>
    </location>
</feature>
<feature type="transmembrane region" description="Helical" evidence="2">
    <location>
        <begin position="310"/>
        <end position="330"/>
    </location>
</feature>
<feature type="transmembrane region" description="Helical" evidence="2">
    <location>
        <begin position="366"/>
        <end position="386"/>
    </location>
</feature>
<feature type="transmembrane region" description="Helical" evidence="2">
    <location>
        <begin position="413"/>
        <end position="433"/>
    </location>
</feature>
<feature type="transmembrane region" description="Helical" evidence="2">
    <location>
        <begin position="457"/>
        <end position="477"/>
    </location>
</feature>
<feature type="transmembrane region" description="Helical" evidence="2">
    <location>
        <begin position="482"/>
        <end position="502"/>
    </location>
</feature>
<feature type="transmembrane region" description="Helical" evidence="2">
    <location>
        <begin position="582"/>
        <end position="602"/>
    </location>
</feature>
<feature type="modified residue" description="N-formylmethionine" evidence="3">
    <location>
        <position position="1"/>
    </location>
</feature>
<feature type="sequence variant" description="In strain: F." evidence="5">
    <original>I</original>
    <variation>T</variation>
    <location>
        <position position="90"/>
    </location>
</feature>
<feature type="sequence conflict" description="In Ref. 1; CAA24005." evidence="6" ref="1">
    <original>T</original>
    <variation>K</variation>
    <location>
        <position position="401"/>
    </location>
</feature>
<feature type="helix" evidence="10">
    <location>
        <begin position="2"/>
        <end position="21"/>
    </location>
</feature>
<feature type="turn" evidence="10">
    <location>
        <begin position="22"/>
        <end position="24"/>
    </location>
</feature>
<feature type="helix" evidence="12">
    <location>
        <begin position="29"/>
        <end position="31"/>
    </location>
</feature>
<feature type="helix" evidence="10">
    <location>
        <begin position="32"/>
        <end position="57"/>
    </location>
</feature>
<feature type="strand" evidence="10">
    <location>
        <begin position="61"/>
        <end position="71"/>
    </location>
</feature>
<feature type="strand" evidence="10">
    <location>
        <begin position="74"/>
        <end position="83"/>
    </location>
</feature>
<feature type="helix" evidence="10">
    <location>
        <begin position="84"/>
        <end position="107"/>
    </location>
</feature>
<feature type="turn" evidence="10">
    <location>
        <begin position="108"/>
        <end position="110"/>
    </location>
</feature>
<feature type="helix" evidence="10">
    <location>
        <begin position="114"/>
        <end position="133"/>
    </location>
</feature>
<feature type="strand" evidence="12">
    <location>
        <begin position="134"/>
        <end position="136"/>
    </location>
</feature>
<feature type="helix" evidence="10">
    <location>
        <begin position="137"/>
        <end position="155"/>
    </location>
</feature>
<feature type="helix" evidence="10">
    <location>
        <begin position="162"/>
        <end position="193"/>
    </location>
</feature>
<feature type="helix" evidence="10">
    <location>
        <begin position="198"/>
        <end position="204"/>
    </location>
</feature>
<feature type="helix" evidence="10">
    <location>
        <begin position="210"/>
        <end position="223"/>
    </location>
</feature>
<feature type="helix" evidence="10">
    <location>
        <begin position="232"/>
        <end position="235"/>
    </location>
</feature>
<feature type="helix" evidence="10">
    <location>
        <begin position="236"/>
        <end position="238"/>
    </location>
</feature>
<feature type="helix" evidence="10">
    <location>
        <begin position="241"/>
        <end position="246"/>
    </location>
</feature>
<feature type="helix" evidence="10">
    <location>
        <begin position="247"/>
        <end position="251"/>
    </location>
</feature>
<feature type="helix" evidence="10">
    <location>
        <begin position="252"/>
        <end position="254"/>
    </location>
</feature>
<feature type="helix" evidence="10">
    <location>
        <begin position="255"/>
        <end position="262"/>
    </location>
</feature>
<feature type="helix" evidence="10">
    <location>
        <begin position="264"/>
        <end position="267"/>
    </location>
</feature>
<feature type="helix" evidence="10">
    <location>
        <begin position="271"/>
        <end position="292"/>
    </location>
</feature>
<feature type="helix" evidence="10">
    <location>
        <begin position="298"/>
        <end position="318"/>
    </location>
</feature>
<feature type="helix" evidence="10">
    <location>
        <begin position="322"/>
        <end position="349"/>
    </location>
</feature>
<feature type="turn" evidence="8">
    <location>
        <begin position="350"/>
        <end position="352"/>
    </location>
</feature>
<feature type="helix" evidence="10">
    <location>
        <begin position="356"/>
        <end position="358"/>
    </location>
</feature>
<feature type="turn" evidence="10">
    <location>
        <begin position="363"/>
        <end position="365"/>
    </location>
</feature>
<feature type="helix" evidence="10">
    <location>
        <begin position="367"/>
        <end position="380"/>
    </location>
</feature>
<feature type="strand" evidence="11">
    <location>
        <begin position="384"/>
        <end position="386"/>
    </location>
</feature>
<feature type="helix" evidence="10">
    <location>
        <begin position="389"/>
        <end position="400"/>
    </location>
</feature>
<feature type="strand" evidence="10">
    <location>
        <begin position="402"/>
        <end position="404"/>
    </location>
</feature>
<feature type="helix" evidence="10">
    <location>
        <begin position="406"/>
        <end position="430"/>
    </location>
</feature>
<feature type="strand" evidence="10">
    <location>
        <begin position="432"/>
        <end position="434"/>
    </location>
</feature>
<feature type="strand" evidence="10">
    <location>
        <begin position="439"/>
        <end position="441"/>
    </location>
</feature>
<feature type="helix" evidence="10">
    <location>
        <begin position="448"/>
        <end position="469"/>
    </location>
</feature>
<feature type="helix" evidence="10">
    <location>
        <begin position="484"/>
        <end position="487"/>
    </location>
</feature>
<feature type="helix" evidence="10">
    <location>
        <begin position="489"/>
        <end position="507"/>
    </location>
</feature>
<feature type="strand" evidence="9">
    <location>
        <begin position="509"/>
        <end position="511"/>
    </location>
</feature>
<feature type="helix" evidence="10">
    <location>
        <begin position="518"/>
        <end position="524"/>
    </location>
</feature>
<feature type="helix" evidence="10">
    <location>
        <begin position="526"/>
        <end position="528"/>
    </location>
</feature>
<feature type="helix" evidence="10">
    <location>
        <begin position="529"/>
        <end position="547"/>
    </location>
</feature>
<feature type="helix" evidence="10">
    <location>
        <begin position="548"/>
        <end position="556"/>
    </location>
</feature>
<feature type="helix" evidence="10">
    <location>
        <begin position="557"/>
        <end position="560"/>
    </location>
</feature>
<feature type="helix" evidence="10">
    <location>
        <begin position="563"/>
        <end position="578"/>
    </location>
</feature>
<feature type="helix" evidence="10">
    <location>
        <begin position="584"/>
        <end position="600"/>
    </location>
</feature>
<gene>
    <name type="primary">MT-ND5</name>
    <name type="synonym">MTND5</name>
    <name type="synonym">NADH5</name>
    <name type="synonym">ND5</name>
</gene>
<evidence type="ECO:0000250" key="1">
    <source>
        <dbReference type="UniProtKB" id="P03915"/>
    </source>
</evidence>
<evidence type="ECO:0000255" key="2"/>
<evidence type="ECO:0000269" key="3">
    <source>
    </source>
</evidence>
<evidence type="ECO:0000269" key="4">
    <source>
    </source>
</evidence>
<evidence type="ECO:0000269" key="5">
    <source ref="2"/>
</evidence>
<evidence type="ECO:0000305" key="6"/>
<evidence type="ECO:0000312" key="7">
    <source>
        <dbReference type="Proteomes" id="UP000009136"/>
    </source>
</evidence>
<evidence type="ECO:0007829" key="8">
    <source>
        <dbReference type="PDB" id="7QSD"/>
    </source>
</evidence>
<evidence type="ECO:0007829" key="9">
    <source>
        <dbReference type="PDB" id="7QSL"/>
    </source>
</evidence>
<evidence type="ECO:0007829" key="10">
    <source>
        <dbReference type="PDB" id="7QSM"/>
    </source>
</evidence>
<evidence type="ECO:0007829" key="11">
    <source>
        <dbReference type="PDB" id="8Q1Y"/>
    </source>
</evidence>
<evidence type="ECO:0007829" key="12">
    <source>
        <dbReference type="PDB" id="8Q48"/>
    </source>
</evidence>
<dbReference type="EC" id="7.1.1.2" evidence="1"/>
<dbReference type="EMBL" id="V00654">
    <property type="protein sequence ID" value="CAA24005.1"/>
    <property type="molecule type" value="Genomic_DNA"/>
</dbReference>
<dbReference type="EMBL" id="AF490528">
    <property type="protein sequence ID" value="AAM08327.1"/>
    <property type="molecule type" value="Genomic_DNA"/>
</dbReference>
<dbReference type="EMBL" id="AF490529">
    <property type="protein sequence ID" value="AAM08340.1"/>
    <property type="molecule type" value="Genomic_DNA"/>
</dbReference>
<dbReference type="EMBL" id="AF493541">
    <property type="protein sequence ID" value="AAM12799.1"/>
    <property type="molecule type" value="Genomic_DNA"/>
</dbReference>
<dbReference type="EMBL" id="AF493542">
    <property type="protein sequence ID" value="AAM12812.1"/>
    <property type="molecule type" value="Genomic_DNA"/>
</dbReference>
<dbReference type="PIR" id="A00450">
    <property type="entry name" value="QXBO5M"/>
</dbReference>
<dbReference type="PDB" id="5LC5">
    <property type="method" value="EM"/>
    <property type="resolution" value="4.35 A"/>
    <property type="chains" value="L=2-605"/>
</dbReference>
<dbReference type="PDB" id="5LDW">
    <property type="method" value="EM"/>
    <property type="resolution" value="4.27 A"/>
    <property type="chains" value="L=1-606"/>
</dbReference>
<dbReference type="PDB" id="5LDX">
    <property type="method" value="EM"/>
    <property type="resolution" value="5.60 A"/>
    <property type="chains" value="L=1-606"/>
</dbReference>
<dbReference type="PDB" id="5O31">
    <property type="method" value="EM"/>
    <property type="resolution" value="4.13 A"/>
    <property type="chains" value="L=1-606"/>
</dbReference>
<dbReference type="PDB" id="7DGQ">
    <property type="method" value="EM"/>
    <property type="resolution" value="5.00 A"/>
    <property type="chains" value="6=1-606"/>
</dbReference>
<dbReference type="PDB" id="7DGR">
    <property type="method" value="EM"/>
    <property type="resolution" value="4.60 A"/>
    <property type="chains" value="6=1-606"/>
</dbReference>
<dbReference type="PDB" id="7DGS">
    <property type="method" value="EM"/>
    <property type="resolution" value="7.80 A"/>
    <property type="chains" value="6=1-606"/>
</dbReference>
<dbReference type="PDB" id="7DGZ">
    <property type="method" value="EM"/>
    <property type="resolution" value="3.80 A"/>
    <property type="chains" value="6=1-606"/>
</dbReference>
<dbReference type="PDB" id="7DH0">
    <property type="method" value="EM"/>
    <property type="resolution" value="4.20 A"/>
    <property type="chains" value="6=1-606"/>
</dbReference>
<dbReference type="PDB" id="7DKF">
    <property type="method" value="EM"/>
    <property type="resolution" value="8.30 A"/>
    <property type="chains" value="62=1-606"/>
</dbReference>
<dbReference type="PDB" id="7QSD">
    <property type="method" value="EM"/>
    <property type="resolution" value="3.10 A"/>
    <property type="chains" value="L=1-606"/>
</dbReference>
<dbReference type="PDB" id="7QSK">
    <property type="method" value="EM"/>
    <property type="resolution" value="2.84 A"/>
    <property type="chains" value="L=1-606"/>
</dbReference>
<dbReference type="PDB" id="7QSL">
    <property type="method" value="EM"/>
    <property type="resolution" value="2.76 A"/>
    <property type="chains" value="L=1-606"/>
</dbReference>
<dbReference type="PDB" id="7QSM">
    <property type="method" value="EM"/>
    <property type="resolution" value="2.30 A"/>
    <property type="chains" value="L=1-606"/>
</dbReference>
<dbReference type="PDB" id="7QSN">
    <property type="method" value="EM"/>
    <property type="resolution" value="2.81 A"/>
    <property type="chains" value="L=1-606"/>
</dbReference>
<dbReference type="PDB" id="7QSO">
    <property type="method" value="EM"/>
    <property type="resolution" value="3.02 A"/>
    <property type="chains" value="L=1-606"/>
</dbReference>
<dbReference type="PDB" id="7R41">
    <property type="method" value="EM"/>
    <property type="resolution" value="2.30 A"/>
    <property type="chains" value="L=1-606"/>
</dbReference>
<dbReference type="PDB" id="7R42">
    <property type="method" value="EM"/>
    <property type="resolution" value="2.30 A"/>
    <property type="chains" value="L=1-606"/>
</dbReference>
<dbReference type="PDB" id="7R43">
    <property type="method" value="EM"/>
    <property type="resolution" value="2.40 A"/>
    <property type="chains" value="L=1-606"/>
</dbReference>
<dbReference type="PDB" id="7R44">
    <property type="method" value="EM"/>
    <property type="resolution" value="2.40 A"/>
    <property type="chains" value="L=1-606"/>
</dbReference>
<dbReference type="PDB" id="7R45">
    <property type="method" value="EM"/>
    <property type="resolution" value="2.40 A"/>
    <property type="chains" value="L=1-606"/>
</dbReference>
<dbReference type="PDB" id="7R46">
    <property type="method" value="EM"/>
    <property type="resolution" value="2.40 A"/>
    <property type="chains" value="L=1-606"/>
</dbReference>
<dbReference type="PDB" id="7R47">
    <property type="method" value="EM"/>
    <property type="resolution" value="2.30 A"/>
    <property type="chains" value="L=1-606"/>
</dbReference>
<dbReference type="PDB" id="7R48">
    <property type="method" value="EM"/>
    <property type="resolution" value="2.30 A"/>
    <property type="chains" value="L=1-606"/>
</dbReference>
<dbReference type="PDB" id="7R4C">
    <property type="method" value="EM"/>
    <property type="resolution" value="2.30 A"/>
    <property type="chains" value="L=1-606"/>
</dbReference>
<dbReference type="PDB" id="7R4D">
    <property type="method" value="EM"/>
    <property type="resolution" value="2.30 A"/>
    <property type="chains" value="L=1-606"/>
</dbReference>
<dbReference type="PDB" id="7R4F">
    <property type="method" value="EM"/>
    <property type="resolution" value="2.40 A"/>
    <property type="chains" value="L=1-606"/>
</dbReference>
<dbReference type="PDB" id="7R4G">
    <property type="method" value="EM"/>
    <property type="resolution" value="2.50 A"/>
    <property type="chains" value="L=1-606"/>
</dbReference>
<dbReference type="PDB" id="8Q0A">
    <property type="method" value="EM"/>
    <property type="resolution" value="3.10 A"/>
    <property type="chains" value="L=1-606"/>
</dbReference>
<dbReference type="PDB" id="8Q0F">
    <property type="method" value="EM"/>
    <property type="resolution" value="3.10 A"/>
    <property type="chains" value="L=1-606"/>
</dbReference>
<dbReference type="PDB" id="8Q0J">
    <property type="method" value="EM"/>
    <property type="resolution" value="3.80 A"/>
    <property type="chains" value="L=1-606"/>
</dbReference>
<dbReference type="PDB" id="8Q0M">
    <property type="method" value="EM"/>
    <property type="resolution" value="3.10 A"/>
    <property type="chains" value="L=1-606"/>
</dbReference>
<dbReference type="PDB" id="8Q0O">
    <property type="method" value="EM"/>
    <property type="resolution" value="3.10 A"/>
    <property type="chains" value="L=1-606"/>
</dbReference>
<dbReference type="PDB" id="8Q0Q">
    <property type="method" value="EM"/>
    <property type="resolution" value="3.60 A"/>
    <property type="chains" value="L=1-606"/>
</dbReference>
<dbReference type="PDB" id="8Q1P">
    <property type="method" value="EM"/>
    <property type="resolution" value="2.90 A"/>
    <property type="chains" value="L=1-606"/>
</dbReference>
<dbReference type="PDB" id="8Q1U">
    <property type="method" value="EM"/>
    <property type="resolution" value="3.30 A"/>
    <property type="chains" value="L=1-606"/>
</dbReference>
<dbReference type="PDB" id="8Q1Y">
    <property type="method" value="EM"/>
    <property type="resolution" value="2.60 A"/>
    <property type="chains" value="L=1-606"/>
</dbReference>
<dbReference type="PDB" id="8Q25">
    <property type="method" value="EM"/>
    <property type="resolution" value="2.80 A"/>
    <property type="chains" value="L=1-606"/>
</dbReference>
<dbReference type="PDB" id="8Q45">
    <property type="method" value="EM"/>
    <property type="resolution" value="2.70 A"/>
    <property type="chains" value="L=1-606"/>
</dbReference>
<dbReference type="PDB" id="8Q46">
    <property type="method" value="EM"/>
    <property type="resolution" value="2.60 A"/>
    <property type="chains" value="L=1-606"/>
</dbReference>
<dbReference type="PDB" id="8Q47">
    <property type="method" value="EM"/>
    <property type="resolution" value="2.90 A"/>
    <property type="chains" value="L=1-606"/>
</dbReference>
<dbReference type="PDB" id="8Q48">
    <property type="method" value="EM"/>
    <property type="resolution" value="2.50 A"/>
    <property type="chains" value="L=1-606"/>
</dbReference>
<dbReference type="PDB" id="8Q49">
    <property type="method" value="EM"/>
    <property type="resolution" value="2.60 A"/>
    <property type="chains" value="L=1-606"/>
</dbReference>
<dbReference type="PDB" id="8Q4A">
    <property type="method" value="EM"/>
    <property type="resolution" value="2.60 A"/>
    <property type="chains" value="L=1-606"/>
</dbReference>
<dbReference type="PDBsum" id="5LC5"/>
<dbReference type="PDBsum" id="5LDW"/>
<dbReference type="PDBsum" id="5LDX"/>
<dbReference type="PDBsum" id="5O31"/>
<dbReference type="PDBsum" id="7DGQ"/>
<dbReference type="PDBsum" id="7DGR"/>
<dbReference type="PDBsum" id="7DGS"/>
<dbReference type="PDBsum" id="7DGZ"/>
<dbReference type="PDBsum" id="7DH0"/>
<dbReference type="PDBsum" id="7DKF"/>
<dbReference type="PDBsum" id="7QSD"/>
<dbReference type="PDBsum" id="7QSK"/>
<dbReference type="PDBsum" id="7QSL"/>
<dbReference type="PDBsum" id="7QSM"/>
<dbReference type="PDBsum" id="7QSN"/>
<dbReference type="PDBsum" id="7QSO"/>
<dbReference type="PDBsum" id="7R41"/>
<dbReference type="PDBsum" id="7R42"/>
<dbReference type="PDBsum" id="7R43"/>
<dbReference type="PDBsum" id="7R44"/>
<dbReference type="PDBsum" id="7R45"/>
<dbReference type="PDBsum" id="7R46"/>
<dbReference type="PDBsum" id="7R47"/>
<dbReference type="PDBsum" id="7R48"/>
<dbReference type="PDBsum" id="7R4C"/>
<dbReference type="PDBsum" id="7R4D"/>
<dbReference type="PDBsum" id="7R4F"/>
<dbReference type="PDBsum" id="7R4G"/>
<dbReference type="PDBsum" id="8Q0A"/>
<dbReference type="PDBsum" id="8Q0F"/>
<dbReference type="PDBsum" id="8Q0J"/>
<dbReference type="PDBsum" id="8Q0M"/>
<dbReference type="PDBsum" id="8Q0O"/>
<dbReference type="PDBsum" id="8Q0Q"/>
<dbReference type="PDBsum" id="8Q1P"/>
<dbReference type="PDBsum" id="8Q1U"/>
<dbReference type="PDBsum" id="8Q1Y"/>
<dbReference type="PDBsum" id="8Q25"/>
<dbReference type="PDBsum" id="8Q45"/>
<dbReference type="PDBsum" id="8Q46"/>
<dbReference type="PDBsum" id="8Q47"/>
<dbReference type="PDBsum" id="8Q48"/>
<dbReference type="PDBsum" id="8Q49"/>
<dbReference type="PDBsum" id="8Q4A"/>
<dbReference type="EMDB" id="EMD-14127"/>
<dbReference type="EMDB" id="EMD-14132"/>
<dbReference type="EMDB" id="EMD-14133"/>
<dbReference type="EMDB" id="EMD-14134"/>
<dbReference type="EMDB" id="EMD-14139"/>
<dbReference type="EMDB" id="EMD-14140"/>
<dbReference type="EMDB" id="EMD-14251"/>
<dbReference type="EMDB" id="EMD-14256"/>
<dbReference type="EMDB" id="EMD-14261"/>
<dbReference type="EMDB" id="EMD-14266"/>
<dbReference type="EMDB" id="EMD-14272"/>
<dbReference type="EMDB" id="EMD-14277"/>
<dbReference type="EMDB" id="EMD-14282"/>
<dbReference type="EMDB" id="EMD-14287"/>
<dbReference type="EMDB" id="EMD-14292"/>
<dbReference type="EMDB" id="EMD-14297"/>
<dbReference type="EMDB" id="EMD-14302"/>
<dbReference type="EMDB" id="EMD-14307"/>
<dbReference type="EMDB" id="EMD-18051"/>
<dbReference type="EMDB" id="EMD-18052"/>
<dbReference type="EMDB" id="EMD-18054"/>
<dbReference type="EMDB" id="EMD-18055"/>
<dbReference type="EMDB" id="EMD-18057"/>
<dbReference type="EMDB" id="EMD-18059"/>
<dbReference type="EMDB" id="EMD-18066"/>
<dbReference type="EMDB" id="EMD-18067"/>
<dbReference type="EMDB" id="EMD-18068"/>
<dbReference type="EMDB" id="EMD-18069"/>
<dbReference type="EMDB" id="EMD-18138"/>
<dbReference type="EMDB" id="EMD-18139"/>
<dbReference type="EMDB" id="EMD-18140"/>
<dbReference type="EMDB" id="EMD-18141"/>
<dbReference type="EMDB" id="EMD-18142"/>
<dbReference type="EMDB" id="EMD-18143"/>
<dbReference type="EMDB" id="EMD-30673"/>
<dbReference type="EMDB" id="EMD-30674"/>
<dbReference type="EMDB" id="EMD-30675"/>
<dbReference type="EMDB" id="EMD-30676"/>
<dbReference type="EMDB" id="EMD-30677"/>
<dbReference type="EMDB" id="EMD-30706"/>
<dbReference type="EMDB" id="EMD-3731"/>
<dbReference type="EMDB" id="EMD-4032"/>
<dbReference type="EMDB" id="EMD-4040"/>
<dbReference type="EMDB" id="EMD-4041"/>
<dbReference type="SMR" id="P03920"/>
<dbReference type="CORUM" id="P03920"/>
<dbReference type="DIP" id="DIP-38827N"/>
<dbReference type="FunCoup" id="P03920">
    <property type="interactions" value="197"/>
</dbReference>
<dbReference type="IntAct" id="P03920">
    <property type="interactions" value="1"/>
</dbReference>
<dbReference type="STRING" id="9913.ENSBTAP00000053152"/>
<dbReference type="TCDB" id="3.D.1.6.1">
    <property type="family name" value="the h+ or na+-translocating nadh dehydrogenase (ndh) family"/>
</dbReference>
<dbReference type="PaxDb" id="9913-ENSBTAP00000053152"/>
<dbReference type="eggNOG" id="KOG4668">
    <property type="taxonomic scope" value="Eukaryota"/>
</dbReference>
<dbReference type="InParanoid" id="P03920"/>
<dbReference type="Proteomes" id="UP000009136">
    <property type="component" value="Mitochondrion MT"/>
</dbReference>
<dbReference type="Proteomes" id="UP000009136">
    <property type="component" value="Unassembled WGS sequence"/>
</dbReference>
<dbReference type="GO" id="GO:0005743">
    <property type="term" value="C:mitochondrial inner membrane"/>
    <property type="evidence" value="ECO:0000314"/>
    <property type="project" value="UniProtKB"/>
</dbReference>
<dbReference type="GO" id="GO:0045271">
    <property type="term" value="C:respiratory chain complex I"/>
    <property type="evidence" value="ECO:0000314"/>
    <property type="project" value="UniProtKB"/>
</dbReference>
<dbReference type="GO" id="GO:0008137">
    <property type="term" value="F:NADH dehydrogenase (ubiquinone) activity"/>
    <property type="evidence" value="ECO:0000250"/>
    <property type="project" value="UniProtKB"/>
</dbReference>
<dbReference type="GO" id="GO:0015990">
    <property type="term" value="P:electron transport coupled proton transport"/>
    <property type="evidence" value="ECO:0000318"/>
    <property type="project" value="GO_Central"/>
</dbReference>
<dbReference type="GO" id="GO:0006120">
    <property type="term" value="P:mitochondrial electron transport, NADH to ubiquinone"/>
    <property type="evidence" value="ECO:0000250"/>
    <property type="project" value="UniProtKB"/>
</dbReference>
<dbReference type="GO" id="GO:0032981">
    <property type="term" value="P:mitochondrial respiratory chain complex I assembly"/>
    <property type="evidence" value="ECO:0000250"/>
    <property type="project" value="UniProtKB"/>
</dbReference>
<dbReference type="InterPro" id="IPR010934">
    <property type="entry name" value="NADH_DH_su5_C"/>
</dbReference>
<dbReference type="InterPro" id="IPR018393">
    <property type="entry name" value="NADHpl_OxRdtase_5_subgr"/>
</dbReference>
<dbReference type="InterPro" id="IPR001750">
    <property type="entry name" value="ND/Mrp_TM"/>
</dbReference>
<dbReference type="InterPro" id="IPR003945">
    <property type="entry name" value="NU5C-like"/>
</dbReference>
<dbReference type="InterPro" id="IPR001516">
    <property type="entry name" value="Proton_antipo_N"/>
</dbReference>
<dbReference type="NCBIfam" id="TIGR01974">
    <property type="entry name" value="NDH_I_L"/>
    <property type="match status" value="1"/>
</dbReference>
<dbReference type="PANTHER" id="PTHR42829">
    <property type="entry name" value="NADH-UBIQUINONE OXIDOREDUCTASE CHAIN 5"/>
    <property type="match status" value="1"/>
</dbReference>
<dbReference type="PANTHER" id="PTHR42829:SF2">
    <property type="entry name" value="NADH-UBIQUINONE OXIDOREDUCTASE CHAIN 5"/>
    <property type="match status" value="1"/>
</dbReference>
<dbReference type="Pfam" id="PF06455">
    <property type="entry name" value="NADH5_C"/>
    <property type="match status" value="1"/>
</dbReference>
<dbReference type="Pfam" id="PF00361">
    <property type="entry name" value="Proton_antipo_M"/>
    <property type="match status" value="1"/>
</dbReference>
<dbReference type="Pfam" id="PF00662">
    <property type="entry name" value="Proton_antipo_N"/>
    <property type="match status" value="1"/>
</dbReference>
<dbReference type="PRINTS" id="PR01434">
    <property type="entry name" value="NADHDHGNASE5"/>
</dbReference>
<name>NU5M_BOVIN</name>
<reference key="1">
    <citation type="journal article" date="1982" name="J. Mol. Biol.">
        <title>Complete sequence of bovine mitochondrial DNA. Conserved features of the mammalian mitochondrial genome.</title>
        <authorList>
            <person name="Anderson S."/>
            <person name="de Bruijn M.H.L."/>
            <person name="Coulson A.R."/>
            <person name="Eperon I.C."/>
            <person name="Sanger F."/>
            <person name="Young I.G."/>
        </authorList>
    </citation>
    <scope>NUCLEOTIDE SEQUENCE [GENOMIC DNA]</scope>
    <source>
        <strain evidence="7">Hereford</strain>
        <tissue>Heart</tissue>
    </source>
</reference>
<reference key="2">
    <citation type="submission" date="2002-03" db="EMBL/GenBank/DDBJ databases">
        <title>Bos taurus mitochondrial protein coding regions.</title>
        <authorList>
            <person name="Wettstein P.J."/>
        </authorList>
    </citation>
    <scope>NUCLEOTIDE SEQUENCE [GENOMIC DNA]</scope>
    <scope>VARIANT THR-90</scope>
    <source>
        <strain>65</strain>
        <strain>66</strain>
        <strain>D</strain>
        <strain>F</strain>
    </source>
</reference>
<reference key="3">
    <citation type="journal article" date="2006" name="Proc. Natl. Acad. Sci. U.S.A.">
        <title>Definition of the mitochondrial proteome by measurement of molecular masses of membrane proteins.</title>
        <authorList>
            <person name="Carroll J."/>
            <person name="Fearnley I.M."/>
            <person name="Walker J.E."/>
        </authorList>
    </citation>
    <scope>SUBCELLULAR LOCATION</scope>
    <scope>FORMYLATION AT MET-1</scope>
    <scope>MASS SPECTROMETRY</scope>
</reference>
<reference key="4">
    <citation type="journal article" date="2014" name="Nature">
        <title>Architecture of mammalian respiratory complex I.</title>
        <authorList>
            <person name="Vinothkumar K.R."/>
            <person name="Zhu J."/>
            <person name="Hirst J."/>
        </authorList>
    </citation>
    <scope>SUBUNIT</scope>
    <scope>SUBCELLULAR LOCATION</scope>
</reference>
<comment type="function">
    <text evidence="1">Core subunit of the mitochondrial membrane respiratory chain NADH dehydrogenase (Complex I) which catalyzes electron transfer from NADH through the respiratory chain, using ubiquinone as an electron acceptor. Essential for the catalytic activity and assembly of complex I.</text>
</comment>
<comment type="catalytic activity">
    <reaction evidence="1">
        <text>a ubiquinone + NADH + 5 H(+)(in) = a ubiquinol + NAD(+) + 4 H(+)(out)</text>
        <dbReference type="Rhea" id="RHEA:29091"/>
        <dbReference type="Rhea" id="RHEA-COMP:9565"/>
        <dbReference type="Rhea" id="RHEA-COMP:9566"/>
        <dbReference type="ChEBI" id="CHEBI:15378"/>
        <dbReference type="ChEBI" id="CHEBI:16389"/>
        <dbReference type="ChEBI" id="CHEBI:17976"/>
        <dbReference type="ChEBI" id="CHEBI:57540"/>
        <dbReference type="ChEBI" id="CHEBI:57945"/>
        <dbReference type="EC" id="7.1.1.2"/>
    </reaction>
</comment>
<comment type="subunit">
    <text evidence="4">Core subunit of respiratory chain NADH dehydrogenase (Complex I) which is composed of 45 different subunits.</text>
</comment>
<comment type="subcellular location">
    <subcellularLocation>
        <location evidence="3">Mitochondrion inner membrane</location>
        <topology evidence="2">Multi-pass membrane protein</topology>
    </subcellularLocation>
</comment>
<comment type="mass spectrometry" mass="68319.8" method="Electrospray" evidence="3"/>
<comment type="similarity">
    <text evidence="6">Belongs to the complex I subunit 5 family.</text>
</comment>
<proteinExistence type="evidence at protein level"/>
<protein>
    <recommendedName>
        <fullName>NADH-ubiquinone oxidoreductase chain 5</fullName>
        <ecNumber evidence="1">7.1.1.2</ecNumber>
    </recommendedName>
    <alternativeName>
        <fullName>NADH dehydrogenase subunit 5</fullName>
    </alternativeName>
</protein>
<accession>P03920</accession>
<accession>Q8SEN2</accession>
<accession>Q8SFW8</accession>
<sequence length="606" mass="68286">MNMFSSLSLVTLLLLTMPIMMMSFNTYKPSNYPLYVKTAISYAFITSMIPTMMFIHSGQELIISNWHWLTIQTLKLSLSFKMDYFSMMFIPVALFVTWSIMEFSMWYMYSDPNINKFFKYLLLFLITMLILVTANNLFQLFIGWEGVGIMSFLLIGWWYGRADANTAALQAILYNRIGDIGFILAMAWFLTNLNTWDLQQIFMLNPSDSNMPLIGLALAATGKSAQFGLHPWLPSAMEGPTPVSALLHSSTMVVAGIFLLIRFYPLTENNKYIQSITLCLGAITTLFTAMCALTQNDIKKIIAFSTSSQLGLMMVTIGINQPYLAFLHICTHAFFKAMLFMCSGSIIHSLNDEQDIRKMGGLFKAMPFTTTALIVGSLALTGMPFLTGFYSKDLIIEAANTSYTNAWALLMTLIATSFTAIYSTRIIFFALLGQPRFPTLVNINENNPLLINSIKRLLIGSLFAGYIISNNIPPTTIPQMTMPYYLKTTALIVTILGFILALEISNMTKNLKYHYPSNAFKFSTLLGYFPTIMHRLAPYMNLSMSQKSASSLLDLIWLEAILPKTISLAQMKASTLVTNQKGLIKLYFLSFLITILISMILFNFHE</sequence>
<geneLocation type="mitochondrion"/>
<organism>
    <name type="scientific">Bos taurus</name>
    <name type="common">Bovine</name>
    <dbReference type="NCBI Taxonomy" id="9913"/>
    <lineage>
        <taxon>Eukaryota</taxon>
        <taxon>Metazoa</taxon>
        <taxon>Chordata</taxon>
        <taxon>Craniata</taxon>
        <taxon>Vertebrata</taxon>
        <taxon>Euteleostomi</taxon>
        <taxon>Mammalia</taxon>
        <taxon>Eutheria</taxon>
        <taxon>Laurasiatheria</taxon>
        <taxon>Artiodactyla</taxon>
        <taxon>Ruminantia</taxon>
        <taxon>Pecora</taxon>
        <taxon>Bovidae</taxon>
        <taxon>Bovinae</taxon>
        <taxon>Bos</taxon>
    </lineage>
</organism>
<keyword id="KW-0002">3D-structure</keyword>
<keyword id="KW-0249">Electron transport</keyword>
<keyword id="KW-0291">Formylation</keyword>
<keyword id="KW-0472">Membrane</keyword>
<keyword id="KW-0496">Mitochondrion</keyword>
<keyword id="KW-0999">Mitochondrion inner membrane</keyword>
<keyword id="KW-0520">NAD</keyword>
<keyword id="KW-1185">Reference proteome</keyword>
<keyword id="KW-0679">Respiratory chain</keyword>
<keyword id="KW-1278">Translocase</keyword>
<keyword id="KW-0812">Transmembrane</keyword>
<keyword id="KW-1133">Transmembrane helix</keyword>
<keyword id="KW-0813">Transport</keyword>
<keyword id="KW-0830">Ubiquinone</keyword>